<proteinExistence type="inferred from homology"/>
<comment type="function">
    <text evidence="1">Probably catalyzes the hydrolysis of L-ascorbate-6-P into 3-keto-L-gulonate-6-P. Is essential for L-ascorbate utilization under anaerobic conditions.</text>
</comment>
<comment type="catalytic activity">
    <reaction evidence="1">
        <text>L-ascorbate 6-phosphate + H2O = 3-dehydro-L-gulonate 6-phosphate</text>
        <dbReference type="Rhea" id="RHEA:28803"/>
        <dbReference type="ChEBI" id="CHEBI:15377"/>
        <dbReference type="ChEBI" id="CHEBI:58774"/>
        <dbReference type="ChEBI" id="CHEBI:61698"/>
    </reaction>
</comment>
<comment type="cofactor">
    <cofactor evidence="1">
        <name>a divalent metal cation</name>
        <dbReference type="ChEBI" id="CHEBI:60240"/>
    </cofactor>
</comment>
<comment type="pathway">
    <text evidence="1">Cofactor degradation; L-ascorbate degradation; D-xylulose 5-phosphate from L-ascorbate: step 1/4.</text>
</comment>
<comment type="subcellular location">
    <subcellularLocation>
        <location evidence="1">Cytoplasm</location>
    </subcellularLocation>
</comment>
<comment type="induction">
    <text evidence="1">Induced by L-ascorbate. Repressed by UlaR.</text>
</comment>
<comment type="similarity">
    <text evidence="1">Belongs to the UlaG family.</text>
</comment>
<evidence type="ECO:0000255" key="1">
    <source>
        <dbReference type="HAMAP-Rule" id="MF_01266"/>
    </source>
</evidence>
<feature type="chain" id="PRO_1000140105" description="Probable L-ascorbate-6-phosphate lactonase UlaG">
    <location>
        <begin position="1"/>
        <end position="354"/>
    </location>
</feature>
<protein>
    <recommendedName>
        <fullName evidence="1">Probable L-ascorbate-6-phosphate lactonase UlaG</fullName>
        <ecNumber evidence="1">3.1.1.-</ecNumber>
    </recommendedName>
    <alternativeName>
        <fullName evidence="1">L-ascorbate utilization protein G</fullName>
    </alternativeName>
</protein>
<dbReference type="EC" id="3.1.1.-" evidence="1"/>
<dbReference type="EMBL" id="CP001113">
    <property type="protein sequence ID" value="ACF61405.1"/>
    <property type="molecule type" value="Genomic_DNA"/>
</dbReference>
<dbReference type="RefSeq" id="WP_000049161.1">
    <property type="nucleotide sequence ID" value="NZ_CCMR01000003.1"/>
</dbReference>
<dbReference type="SMR" id="B4T3E3"/>
<dbReference type="GeneID" id="66758606"/>
<dbReference type="KEGG" id="see:SNSL254_A4743"/>
<dbReference type="HOGENOM" id="CLU_074775_0_0_6"/>
<dbReference type="UniPathway" id="UPA00263">
    <property type="reaction ID" value="UER00377"/>
</dbReference>
<dbReference type="Proteomes" id="UP000008824">
    <property type="component" value="Chromosome"/>
</dbReference>
<dbReference type="GO" id="GO:0005737">
    <property type="term" value="C:cytoplasm"/>
    <property type="evidence" value="ECO:0007669"/>
    <property type="project" value="UniProtKB-SubCell"/>
</dbReference>
<dbReference type="GO" id="GO:0035460">
    <property type="term" value="F:L-ascorbate 6-phosphate lactonase activity"/>
    <property type="evidence" value="ECO:0007669"/>
    <property type="project" value="InterPro"/>
</dbReference>
<dbReference type="GO" id="GO:0030145">
    <property type="term" value="F:manganese ion binding"/>
    <property type="evidence" value="ECO:0007669"/>
    <property type="project" value="InterPro"/>
</dbReference>
<dbReference type="GO" id="GO:0019854">
    <property type="term" value="P:L-ascorbic acid catabolic process"/>
    <property type="evidence" value="ECO:0007669"/>
    <property type="project" value="UniProtKB-UniRule"/>
</dbReference>
<dbReference type="CDD" id="cd16284">
    <property type="entry name" value="UlaG-like_MBL-fold"/>
    <property type="match status" value="1"/>
</dbReference>
<dbReference type="FunFam" id="3.60.15.10:FF:000004">
    <property type="entry name" value="Probable L-ascorbate-6-phosphate lactonase UlaG"/>
    <property type="match status" value="1"/>
</dbReference>
<dbReference type="Gene3D" id="3.60.15.10">
    <property type="entry name" value="Ribonuclease Z/Hydroxyacylglutathione hydrolase-like"/>
    <property type="match status" value="1"/>
</dbReference>
<dbReference type="HAMAP" id="MF_01266">
    <property type="entry name" value="UlaG"/>
    <property type="match status" value="1"/>
</dbReference>
<dbReference type="InterPro" id="IPR023951">
    <property type="entry name" value="L-ascorbate_6P_UlaG"/>
</dbReference>
<dbReference type="InterPro" id="IPR001279">
    <property type="entry name" value="Metallo-B-lactamas"/>
</dbReference>
<dbReference type="InterPro" id="IPR036866">
    <property type="entry name" value="RibonucZ/Hydroxyglut_hydro"/>
</dbReference>
<dbReference type="InterPro" id="IPR048021">
    <property type="entry name" value="UlaG-like_MBL-fold"/>
</dbReference>
<dbReference type="InterPro" id="IPR050114">
    <property type="entry name" value="UPF0173_UPF0282_UlaG_hydrolase"/>
</dbReference>
<dbReference type="NCBIfam" id="NF008688">
    <property type="entry name" value="PRK11709.1"/>
    <property type="match status" value="1"/>
</dbReference>
<dbReference type="PANTHER" id="PTHR43546:SF9">
    <property type="entry name" value="L-ASCORBATE-6-PHOSPHATE LACTONASE ULAG-RELATED"/>
    <property type="match status" value="1"/>
</dbReference>
<dbReference type="PANTHER" id="PTHR43546">
    <property type="entry name" value="UPF0173 METAL-DEPENDENT HYDROLASE MJ1163-RELATED"/>
    <property type="match status" value="1"/>
</dbReference>
<dbReference type="Pfam" id="PF12706">
    <property type="entry name" value="Lactamase_B_2"/>
    <property type="match status" value="1"/>
</dbReference>
<dbReference type="SUPFAM" id="SSF56281">
    <property type="entry name" value="Metallo-hydrolase/oxidoreductase"/>
    <property type="match status" value="1"/>
</dbReference>
<keyword id="KW-0963">Cytoplasm</keyword>
<keyword id="KW-0378">Hydrolase</keyword>
<sequence>MSKVQSITRESWILSTFPEWGSWLNEEIEQEQVAPGTFAMWWLGCTGIWLKSEGGTNVCVDFWCGTGKQSHGNPLMKTGHQMQRMAGVKKLQPNLRTTPFVLDPFAIRQIDAVLATHDHNDHIDVNVAAAVMQNCADDVPFIGPQTCVDLWVGWGVPKERCIVVKPGDVVKVKDIEIHALDAFDRTALITLPADQKAAGVLPDGMDVRAVNYLFKTPGGNLYHSGDSHYSNYYAKHGNEHQIDVALGSYGENPRGITDKMTSADILRMAESLNTKVVIPFHHDIWSNFQADPQEIRVLWEMKKDRLKYGFKPFIWQVGGKFTWPLDKDNFEYHYPRGFDDCFTIEPDLPFKSFL</sequence>
<gene>
    <name evidence="1" type="primary">ulaG</name>
    <name type="ordered locus">SNSL254_A4743</name>
</gene>
<reference key="1">
    <citation type="journal article" date="2011" name="J. Bacteriol.">
        <title>Comparative genomics of 28 Salmonella enterica isolates: evidence for CRISPR-mediated adaptive sublineage evolution.</title>
        <authorList>
            <person name="Fricke W.F."/>
            <person name="Mammel M.K."/>
            <person name="McDermott P.F."/>
            <person name="Tartera C."/>
            <person name="White D.G."/>
            <person name="Leclerc J.E."/>
            <person name="Ravel J."/>
            <person name="Cebula T.A."/>
        </authorList>
    </citation>
    <scope>NUCLEOTIDE SEQUENCE [LARGE SCALE GENOMIC DNA]</scope>
    <source>
        <strain>SL254</strain>
    </source>
</reference>
<accession>B4T3E3</accession>
<organism>
    <name type="scientific">Salmonella newport (strain SL254)</name>
    <dbReference type="NCBI Taxonomy" id="423368"/>
    <lineage>
        <taxon>Bacteria</taxon>
        <taxon>Pseudomonadati</taxon>
        <taxon>Pseudomonadota</taxon>
        <taxon>Gammaproteobacteria</taxon>
        <taxon>Enterobacterales</taxon>
        <taxon>Enterobacteriaceae</taxon>
        <taxon>Salmonella</taxon>
    </lineage>
</organism>
<name>ULAG_SALNS</name>